<organism>
    <name type="scientific">Salmonella gallinarum (strain 287/91 / NCTC 13346)</name>
    <dbReference type="NCBI Taxonomy" id="550538"/>
    <lineage>
        <taxon>Bacteria</taxon>
        <taxon>Pseudomonadati</taxon>
        <taxon>Pseudomonadota</taxon>
        <taxon>Gammaproteobacteria</taxon>
        <taxon>Enterobacterales</taxon>
        <taxon>Enterobacteriaceae</taxon>
        <taxon>Salmonella</taxon>
    </lineage>
</organism>
<comment type="function">
    <text evidence="1">Catalyzes the conversion of 3-deoxy-D-arabino-heptulosonate 7-phosphate (DAHP) to dehydroquinate (DHQ).</text>
</comment>
<comment type="catalytic activity">
    <reaction evidence="1">
        <text>7-phospho-2-dehydro-3-deoxy-D-arabino-heptonate = 3-dehydroquinate + phosphate</text>
        <dbReference type="Rhea" id="RHEA:21968"/>
        <dbReference type="ChEBI" id="CHEBI:32364"/>
        <dbReference type="ChEBI" id="CHEBI:43474"/>
        <dbReference type="ChEBI" id="CHEBI:58394"/>
        <dbReference type="EC" id="4.2.3.4"/>
    </reaction>
</comment>
<comment type="cofactor">
    <cofactor evidence="1">
        <name>Co(2+)</name>
        <dbReference type="ChEBI" id="CHEBI:48828"/>
    </cofactor>
    <cofactor evidence="1">
        <name>Zn(2+)</name>
        <dbReference type="ChEBI" id="CHEBI:29105"/>
    </cofactor>
    <text evidence="1">Binds 1 divalent metal cation per subunit. Can use either Co(2+) or Zn(2+).</text>
</comment>
<comment type="cofactor">
    <cofactor evidence="1">
        <name>NAD(+)</name>
        <dbReference type="ChEBI" id="CHEBI:57540"/>
    </cofactor>
</comment>
<comment type="pathway">
    <text evidence="1">Metabolic intermediate biosynthesis; chorismate biosynthesis; chorismate from D-erythrose 4-phosphate and phosphoenolpyruvate: step 2/7.</text>
</comment>
<comment type="subcellular location">
    <subcellularLocation>
        <location evidence="1">Cytoplasm</location>
    </subcellularLocation>
</comment>
<comment type="similarity">
    <text evidence="1">Belongs to the sugar phosphate cyclases superfamily. Dehydroquinate synthase family.</text>
</comment>
<gene>
    <name evidence="1" type="primary">aroB</name>
    <name type="ordered locus">SG3952</name>
</gene>
<proteinExistence type="inferred from homology"/>
<name>AROB_SALG2</name>
<accession>B5R7M8</accession>
<reference key="1">
    <citation type="journal article" date="2008" name="Genome Res.">
        <title>Comparative genome analysis of Salmonella enteritidis PT4 and Salmonella gallinarum 287/91 provides insights into evolutionary and host adaptation pathways.</title>
        <authorList>
            <person name="Thomson N.R."/>
            <person name="Clayton D.J."/>
            <person name="Windhorst D."/>
            <person name="Vernikos G."/>
            <person name="Davidson S."/>
            <person name="Churcher C."/>
            <person name="Quail M.A."/>
            <person name="Stevens M."/>
            <person name="Jones M.A."/>
            <person name="Watson M."/>
            <person name="Barron A."/>
            <person name="Layton A."/>
            <person name="Pickard D."/>
            <person name="Kingsley R.A."/>
            <person name="Bignell A."/>
            <person name="Clark L."/>
            <person name="Harris B."/>
            <person name="Ormond D."/>
            <person name="Abdellah Z."/>
            <person name="Brooks K."/>
            <person name="Cherevach I."/>
            <person name="Chillingworth T."/>
            <person name="Woodward J."/>
            <person name="Norberczak H."/>
            <person name="Lord A."/>
            <person name="Arrowsmith C."/>
            <person name="Jagels K."/>
            <person name="Moule S."/>
            <person name="Mungall K."/>
            <person name="Saunders M."/>
            <person name="Whitehead S."/>
            <person name="Chabalgoity J.A."/>
            <person name="Maskell D."/>
            <person name="Humphreys T."/>
            <person name="Roberts M."/>
            <person name="Barrow P.A."/>
            <person name="Dougan G."/>
            <person name="Parkhill J."/>
        </authorList>
    </citation>
    <scope>NUCLEOTIDE SEQUENCE [LARGE SCALE GENOMIC DNA]</scope>
    <source>
        <strain>287/91 / NCTC 13346</strain>
    </source>
</reference>
<protein>
    <recommendedName>
        <fullName evidence="1">3-dehydroquinate synthase</fullName>
        <shortName evidence="1">DHQS</shortName>
        <ecNumber evidence="1">4.2.3.4</ecNumber>
    </recommendedName>
</protein>
<keyword id="KW-0028">Amino-acid biosynthesis</keyword>
<keyword id="KW-0057">Aromatic amino acid biosynthesis</keyword>
<keyword id="KW-0170">Cobalt</keyword>
<keyword id="KW-0963">Cytoplasm</keyword>
<keyword id="KW-0456">Lyase</keyword>
<keyword id="KW-0479">Metal-binding</keyword>
<keyword id="KW-0520">NAD</keyword>
<keyword id="KW-0547">Nucleotide-binding</keyword>
<keyword id="KW-0862">Zinc</keyword>
<feature type="chain" id="PRO_1000094598" description="3-dehydroquinate synthase">
    <location>
        <begin position="1"/>
        <end position="362"/>
    </location>
</feature>
<feature type="binding site" evidence="1">
    <location>
        <begin position="71"/>
        <end position="76"/>
    </location>
    <ligand>
        <name>NAD(+)</name>
        <dbReference type="ChEBI" id="CHEBI:57540"/>
    </ligand>
</feature>
<feature type="binding site" evidence="1">
    <location>
        <begin position="105"/>
        <end position="109"/>
    </location>
    <ligand>
        <name>NAD(+)</name>
        <dbReference type="ChEBI" id="CHEBI:57540"/>
    </ligand>
</feature>
<feature type="binding site" evidence="1">
    <location>
        <begin position="129"/>
        <end position="130"/>
    </location>
    <ligand>
        <name>NAD(+)</name>
        <dbReference type="ChEBI" id="CHEBI:57540"/>
    </ligand>
</feature>
<feature type="binding site" evidence="1">
    <location>
        <position position="142"/>
    </location>
    <ligand>
        <name>NAD(+)</name>
        <dbReference type="ChEBI" id="CHEBI:57540"/>
    </ligand>
</feature>
<feature type="binding site" evidence="1">
    <location>
        <position position="151"/>
    </location>
    <ligand>
        <name>NAD(+)</name>
        <dbReference type="ChEBI" id="CHEBI:57540"/>
    </ligand>
</feature>
<feature type="binding site" evidence="1">
    <location>
        <begin position="169"/>
        <end position="172"/>
    </location>
    <ligand>
        <name>NAD(+)</name>
        <dbReference type="ChEBI" id="CHEBI:57540"/>
    </ligand>
</feature>
<feature type="binding site" evidence="1">
    <location>
        <position position="184"/>
    </location>
    <ligand>
        <name>Zn(2+)</name>
        <dbReference type="ChEBI" id="CHEBI:29105"/>
    </ligand>
</feature>
<feature type="binding site" evidence="1">
    <location>
        <position position="247"/>
    </location>
    <ligand>
        <name>Zn(2+)</name>
        <dbReference type="ChEBI" id="CHEBI:29105"/>
    </ligand>
</feature>
<feature type="binding site" evidence="1">
    <location>
        <position position="264"/>
    </location>
    <ligand>
        <name>Zn(2+)</name>
        <dbReference type="ChEBI" id="CHEBI:29105"/>
    </ligand>
</feature>
<evidence type="ECO:0000255" key="1">
    <source>
        <dbReference type="HAMAP-Rule" id="MF_00110"/>
    </source>
</evidence>
<dbReference type="EC" id="4.2.3.4" evidence="1"/>
<dbReference type="EMBL" id="AM933173">
    <property type="protein sequence ID" value="CAR39725.1"/>
    <property type="molecule type" value="Genomic_DNA"/>
</dbReference>
<dbReference type="RefSeq" id="WP_000439826.1">
    <property type="nucleotide sequence ID" value="NC_011274.1"/>
</dbReference>
<dbReference type="SMR" id="B5R7M8"/>
<dbReference type="KEGG" id="seg:SG3952"/>
<dbReference type="HOGENOM" id="CLU_001201_0_2_6"/>
<dbReference type="UniPathway" id="UPA00053">
    <property type="reaction ID" value="UER00085"/>
</dbReference>
<dbReference type="Proteomes" id="UP000008321">
    <property type="component" value="Chromosome"/>
</dbReference>
<dbReference type="GO" id="GO:0005737">
    <property type="term" value="C:cytoplasm"/>
    <property type="evidence" value="ECO:0007669"/>
    <property type="project" value="UniProtKB-SubCell"/>
</dbReference>
<dbReference type="GO" id="GO:0003856">
    <property type="term" value="F:3-dehydroquinate synthase activity"/>
    <property type="evidence" value="ECO:0007669"/>
    <property type="project" value="UniProtKB-UniRule"/>
</dbReference>
<dbReference type="GO" id="GO:0046872">
    <property type="term" value="F:metal ion binding"/>
    <property type="evidence" value="ECO:0007669"/>
    <property type="project" value="UniProtKB-KW"/>
</dbReference>
<dbReference type="GO" id="GO:0000166">
    <property type="term" value="F:nucleotide binding"/>
    <property type="evidence" value="ECO:0007669"/>
    <property type="project" value="UniProtKB-KW"/>
</dbReference>
<dbReference type="GO" id="GO:0008652">
    <property type="term" value="P:amino acid biosynthetic process"/>
    <property type="evidence" value="ECO:0007669"/>
    <property type="project" value="UniProtKB-KW"/>
</dbReference>
<dbReference type="GO" id="GO:0009073">
    <property type="term" value="P:aromatic amino acid family biosynthetic process"/>
    <property type="evidence" value="ECO:0007669"/>
    <property type="project" value="UniProtKB-KW"/>
</dbReference>
<dbReference type="GO" id="GO:0009423">
    <property type="term" value="P:chorismate biosynthetic process"/>
    <property type="evidence" value="ECO:0007669"/>
    <property type="project" value="UniProtKB-UniRule"/>
</dbReference>
<dbReference type="CDD" id="cd08195">
    <property type="entry name" value="DHQS"/>
    <property type="match status" value="1"/>
</dbReference>
<dbReference type="FunFam" id="1.20.1090.10:FF:000002">
    <property type="entry name" value="3-dehydroquinate synthase"/>
    <property type="match status" value="1"/>
</dbReference>
<dbReference type="FunFam" id="3.40.50.1970:FF:000001">
    <property type="entry name" value="3-dehydroquinate synthase"/>
    <property type="match status" value="1"/>
</dbReference>
<dbReference type="Gene3D" id="3.40.50.1970">
    <property type="match status" value="1"/>
</dbReference>
<dbReference type="Gene3D" id="1.20.1090.10">
    <property type="entry name" value="Dehydroquinate synthase-like - alpha domain"/>
    <property type="match status" value="1"/>
</dbReference>
<dbReference type="HAMAP" id="MF_00110">
    <property type="entry name" value="DHQ_synthase"/>
    <property type="match status" value="1"/>
</dbReference>
<dbReference type="InterPro" id="IPR050071">
    <property type="entry name" value="Dehydroquinate_synthase"/>
</dbReference>
<dbReference type="InterPro" id="IPR016037">
    <property type="entry name" value="DHQ_synth_AroB"/>
</dbReference>
<dbReference type="InterPro" id="IPR030963">
    <property type="entry name" value="DHQ_synth_fam"/>
</dbReference>
<dbReference type="InterPro" id="IPR030960">
    <property type="entry name" value="DHQS/DOIS_N"/>
</dbReference>
<dbReference type="InterPro" id="IPR056179">
    <property type="entry name" value="DHQS_C"/>
</dbReference>
<dbReference type="NCBIfam" id="TIGR01357">
    <property type="entry name" value="aroB"/>
    <property type="match status" value="1"/>
</dbReference>
<dbReference type="PANTHER" id="PTHR43622">
    <property type="entry name" value="3-DEHYDROQUINATE SYNTHASE"/>
    <property type="match status" value="1"/>
</dbReference>
<dbReference type="PANTHER" id="PTHR43622:SF7">
    <property type="entry name" value="3-DEHYDROQUINATE SYNTHASE, CHLOROPLASTIC"/>
    <property type="match status" value="1"/>
</dbReference>
<dbReference type="Pfam" id="PF01761">
    <property type="entry name" value="DHQ_synthase"/>
    <property type="match status" value="1"/>
</dbReference>
<dbReference type="Pfam" id="PF24621">
    <property type="entry name" value="DHQS_C"/>
    <property type="match status" value="1"/>
</dbReference>
<dbReference type="PIRSF" id="PIRSF001455">
    <property type="entry name" value="DHQ_synth"/>
    <property type="match status" value="1"/>
</dbReference>
<dbReference type="SUPFAM" id="SSF56796">
    <property type="entry name" value="Dehydroquinate synthase-like"/>
    <property type="match status" value="1"/>
</dbReference>
<sequence length="362" mass="38710">MERITVTLGERSYPITIAAGLFNEPASFLPLKSGDQVMLVTNETLAPLYLDKVRGVLERAGVNVDSVILPDGEQYKSLTVLDTVFTALLKKPHGRDTTLVALGGGVIGDLTGFAAASYQRGVRFIQVPTTLLSQVDSSVGGKTAVNHPLGKNMIGAFYQPASVVVDLDCLKTLPARELASGLAEVIKYGIILDADFFTWLEGNLDALLRLDGPAMAYCIRRCCELKAEVVAADEREAGLRALLNLGHTFGHAIEAEMGYGNWLHGEAVAAGIVMAARASERLGQFSSTDTQRIIALLERAGLPVNGPCEMSAQDYLPHMLRDKKVLAGELRLVLPLAIGKSEVRGGVSHEVVLSAIADCQQA</sequence>